<dbReference type="EMBL" id="CP000241">
    <property type="protein sequence ID" value="ABF85573.1"/>
    <property type="molecule type" value="Genomic_DNA"/>
</dbReference>
<dbReference type="RefSeq" id="WP_001147918.1">
    <property type="nucleotide sequence ID" value="NC_008086.1"/>
</dbReference>
<dbReference type="SMR" id="Q1CR49"/>
<dbReference type="KEGG" id="hpa:HPAG1_1506"/>
<dbReference type="HOGENOM" id="CLU_147249_3_1_7"/>
<dbReference type="GO" id="GO:0009425">
    <property type="term" value="C:bacterial-type flagellum basal body"/>
    <property type="evidence" value="ECO:0007669"/>
    <property type="project" value="UniProtKB-SubCell"/>
</dbReference>
<dbReference type="GO" id="GO:0003774">
    <property type="term" value="F:cytoskeletal motor activity"/>
    <property type="evidence" value="ECO:0007669"/>
    <property type="project" value="InterPro"/>
</dbReference>
<dbReference type="GO" id="GO:0005198">
    <property type="term" value="F:structural molecule activity"/>
    <property type="evidence" value="ECO:0007669"/>
    <property type="project" value="InterPro"/>
</dbReference>
<dbReference type="GO" id="GO:0071973">
    <property type="term" value="P:bacterial-type flagellum-dependent cell motility"/>
    <property type="evidence" value="ECO:0007669"/>
    <property type="project" value="InterPro"/>
</dbReference>
<dbReference type="HAMAP" id="MF_00724">
    <property type="entry name" value="FliE"/>
    <property type="match status" value="1"/>
</dbReference>
<dbReference type="InterPro" id="IPR001624">
    <property type="entry name" value="FliE"/>
</dbReference>
<dbReference type="NCBIfam" id="TIGR00205">
    <property type="entry name" value="fliE"/>
    <property type="match status" value="1"/>
</dbReference>
<dbReference type="PANTHER" id="PTHR34653">
    <property type="match status" value="1"/>
</dbReference>
<dbReference type="PANTHER" id="PTHR34653:SF1">
    <property type="entry name" value="FLAGELLAR HOOK-BASAL BODY COMPLEX PROTEIN FLIE"/>
    <property type="match status" value="1"/>
</dbReference>
<dbReference type="Pfam" id="PF02049">
    <property type="entry name" value="FliE"/>
    <property type="match status" value="1"/>
</dbReference>
<dbReference type="PRINTS" id="PR01006">
    <property type="entry name" value="FLGHOOKFLIE"/>
</dbReference>
<keyword id="KW-0975">Bacterial flagellum</keyword>
<reference key="1">
    <citation type="journal article" date="2006" name="Proc. Natl. Acad. Sci. U.S.A.">
        <title>The complete genome sequence of a chronic atrophic gastritis Helicobacter pylori strain: evolution during disease progression.</title>
        <authorList>
            <person name="Oh J.D."/>
            <person name="Kling-Baeckhed H."/>
            <person name="Giannakis M."/>
            <person name="Xu J."/>
            <person name="Fulton R.S."/>
            <person name="Fulton L.A."/>
            <person name="Cordum H.S."/>
            <person name="Wang C."/>
            <person name="Elliott G."/>
            <person name="Edwards J."/>
            <person name="Mardis E.R."/>
            <person name="Engstrand L.G."/>
            <person name="Gordon J.I."/>
        </authorList>
    </citation>
    <scope>NUCLEOTIDE SEQUENCE [LARGE SCALE GENOMIC DNA]</scope>
    <source>
        <strain>HPAG1</strain>
    </source>
</reference>
<accession>Q1CR49</accession>
<name>FLIE_HELPH</name>
<proteinExistence type="inferred from homology"/>
<sequence length="109" mass="12196">MQAIHNDKSLLSPFSELNTDNRTKREESGSTFKEQKGGEFSKLLKQSINELNNTQEQSDKALADMATGQIKDLHQAAIAIGKAETSMKLMLEVRNKAISAYKELLRTQI</sequence>
<evidence type="ECO:0000255" key="1">
    <source>
        <dbReference type="HAMAP-Rule" id="MF_00724"/>
    </source>
</evidence>
<evidence type="ECO:0000256" key="2">
    <source>
        <dbReference type="SAM" id="MobiDB-lite"/>
    </source>
</evidence>
<organism>
    <name type="scientific">Helicobacter pylori (strain HPAG1)</name>
    <dbReference type="NCBI Taxonomy" id="357544"/>
    <lineage>
        <taxon>Bacteria</taxon>
        <taxon>Pseudomonadati</taxon>
        <taxon>Campylobacterota</taxon>
        <taxon>Epsilonproteobacteria</taxon>
        <taxon>Campylobacterales</taxon>
        <taxon>Helicobacteraceae</taxon>
        <taxon>Helicobacter</taxon>
    </lineage>
</organism>
<gene>
    <name evidence="1" type="primary">fliE</name>
    <name type="ordered locus">HPAG1_1506</name>
</gene>
<comment type="subcellular location">
    <subcellularLocation>
        <location evidence="1">Bacterial flagellum basal body</location>
    </subcellularLocation>
</comment>
<comment type="similarity">
    <text evidence="1">Belongs to the FliE family.</text>
</comment>
<protein>
    <recommendedName>
        <fullName evidence="1">Flagellar hook-basal body complex protein FliE</fullName>
    </recommendedName>
</protein>
<feature type="chain" id="PRO_1000045858" description="Flagellar hook-basal body complex protein FliE">
    <location>
        <begin position="1"/>
        <end position="109"/>
    </location>
</feature>
<feature type="region of interest" description="Disordered" evidence="2">
    <location>
        <begin position="1"/>
        <end position="38"/>
    </location>
</feature>
<feature type="compositionally biased region" description="Basic and acidic residues" evidence="2">
    <location>
        <begin position="19"/>
        <end position="38"/>
    </location>
</feature>